<keyword id="KW-0963">Cytoplasm</keyword>
<keyword id="KW-0378">Hydrolase</keyword>
<keyword id="KW-0554">One-carbon metabolism</keyword>
<keyword id="KW-1185">Reference proteome</keyword>
<feature type="chain" id="PRO_1000191112" description="Methenyltetrahydromethanopterin cyclohydrolase">
    <location>
        <begin position="1"/>
        <end position="324"/>
    </location>
</feature>
<name>MCH_METNO</name>
<evidence type="ECO:0000255" key="1">
    <source>
        <dbReference type="HAMAP-Rule" id="MF_00486"/>
    </source>
</evidence>
<proteinExistence type="inferred from homology"/>
<reference key="1">
    <citation type="submission" date="2009-01" db="EMBL/GenBank/DDBJ databases">
        <title>Complete sequence of chromosome of Methylobacterium nodulans ORS 2060.</title>
        <authorList>
            <consortium name="US DOE Joint Genome Institute"/>
            <person name="Lucas S."/>
            <person name="Copeland A."/>
            <person name="Lapidus A."/>
            <person name="Glavina del Rio T."/>
            <person name="Dalin E."/>
            <person name="Tice H."/>
            <person name="Bruce D."/>
            <person name="Goodwin L."/>
            <person name="Pitluck S."/>
            <person name="Sims D."/>
            <person name="Brettin T."/>
            <person name="Detter J.C."/>
            <person name="Han C."/>
            <person name="Larimer F."/>
            <person name="Land M."/>
            <person name="Hauser L."/>
            <person name="Kyrpides N."/>
            <person name="Ivanova N."/>
            <person name="Marx C.J."/>
            <person name="Richardson P."/>
        </authorList>
    </citation>
    <scope>NUCLEOTIDE SEQUENCE [LARGE SCALE GENOMIC DNA]</scope>
    <source>
        <strain>LMG 21967 / CNCM I-2342 / ORS 2060</strain>
    </source>
</reference>
<sequence>MSSTTVRPSVNALAAPLVEALVADAAKLRLTVTANSGEARLVNAGATVLGSIEAGRRIAEICLGGLGTVTIAPTGPVAAWPYTITVHSTDPVLACLGSQYAGWSLADEGGTSGFFALGSGPGRAAAAVEHLFEELHYKDNAVQIALVLESASAPPASVVAKVAEAAGVPLEAVTFIYAPTQSLAGSTQVVARVLEVALHKAHSVGFDLAKIVDGIGAAPLSPPHPDFIQAMGRTNDAIIYGGRVQLFVDAEDADAKGLAEALPSTTSRDHGAPFAEIFARFNGDFYAIDSHLFSPAEVVVTSVRTGHSHRSGRLVPDLVERSFA</sequence>
<gene>
    <name evidence="1" type="primary">mch</name>
    <name type="ordered locus">Mnod_6004</name>
</gene>
<organism>
    <name type="scientific">Methylobacterium nodulans (strain LMG 21967 / CNCM I-2342 / ORS 2060)</name>
    <dbReference type="NCBI Taxonomy" id="460265"/>
    <lineage>
        <taxon>Bacteria</taxon>
        <taxon>Pseudomonadati</taxon>
        <taxon>Pseudomonadota</taxon>
        <taxon>Alphaproteobacteria</taxon>
        <taxon>Hyphomicrobiales</taxon>
        <taxon>Methylobacteriaceae</taxon>
        <taxon>Methylobacterium</taxon>
    </lineage>
</organism>
<accession>B8ITX3</accession>
<comment type="function">
    <text evidence="1">Catalyzes the hydrolysis of methenyl-H(4)MPT(+) to 5-formyl-H(4)MPT.</text>
</comment>
<comment type="catalytic activity">
    <reaction evidence="1">
        <text>5,10-methenyl-5,6,7,8-tetrahydromethanopterin + H2O = N(5)-formyl-5,6,7,8-tetrahydromethanopterin + H(+)</text>
        <dbReference type="Rhea" id="RHEA:19053"/>
        <dbReference type="ChEBI" id="CHEBI:15377"/>
        <dbReference type="ChEBI" id="CHEBI:15378"/>
        <dbReference type="ChEBI" id="CHEBI:58018"/>
        <dbReference type="ChEBI" id="CHEBI:58337"/>
        <dbReference type="EC" id="3.5.4.27"/>
    </reaction>
</comment>
<comment type="pathway">
    <text evidence="1">One-carbon metabolism; formaldehyde degradation; formate from formaldehyde (H(4)MPT route): step 3/5.</text>
</comment>
<comment type="subcellular location">
    <subcellularLocation>
        <location evidence="1">Cytoplasm</location>
    </subcellularLocation>
</comment>
<comment type="similarity">
    <text evidence="1">Belongs to the MCH family.</text>
</comment>
<protein>
    <recommendedName>
        <fullName evidence="1">Methenyltetrahydromethanopterin cyclohydrolase</fullName>
        <ecNumber evidence="1">3.5.4.27</ecNumber>
    </recommendedName>
    <alternativeName>
        <fullName evidence="1">Methenyl-H4MPT cyclohydrolase</fullName>
    </alternativeName>
</protein>
<dbReference type="EC" id="3.5.4.27" evidence="1"/>
<dbReference type="EMBL" id="CP001349">
    <property type="protein sequence ID" value="ACL60831.1"/>
    <property type="molecule type" value="Genomic_DNA"/>
</dbReference>
<dbReference type="RefSeq" id="WP_015932425.1">
    <property type="nucleotide sequence ID" value="NC_011894.1"/>
</dbReference>
<dbReference type="SMR" id="B8ITX3"/>
<dbReference type="STRING" id="460265.Mnod_6004"/>
<dbReference type="KEGG" id="mno:Mnod_6004"/>
<dbReference type="eggNOG" id="COG3252">
    <property type="taxonomic scope" value="Bacteria"/>
</dbReference>
<dbReference type="HOGENOM" id="CLU_876031_0_0_5"/>
<dbReference type="OrthoDB" id="241529at2"/>
<dbReference type="UniPathway" id="UPA00562">
    <property type="reaction ID" value="UER00703"/>
</dbReference>
<dbReference type="Proteomes" id="UP000008207">
    <property type="component" value="Chromosome"/>
</dbReference>
<dbReference type="GO" id="GO:0005737">
    <property type="term" value="C:cytoplasm"/>
    <property type="evidence" value="ECO:0007669"/>
    <property type="project" value="UniProtKB-SubCell"/>
</dbReference>
<dbReference type="GO" id="GO:0018759">
    <property type="term" value="F:methenyltetrahydromethanopterin cyclohydrolase activity"/>
    <property type="evidence" value="ECO:0007669"/>
    <property type="project" value="UniProtKB-UniRule"/>
</dbReference>
<dbReference type="GO" id="GO:0046294">
    <property type="term" value="P:formaldehyde catabolic process"/>
    <property type="evidence" value="ECO:0007669"/>
    <property type="project" value="UniProtKB-UniRule"/>
</dbReference>
<dbReference type="GO" id="GO:0006730">
    <property type="term" value="P:one-carbon metabolic process"/>
    <property type="evidence" value="ECO:0007669"/>
    <property type="project" value="UniProtKB-UniRule"/>
</dbReference>
<dbReference type="CDD" id="cd00545">
    <property type="entry name" value="MCH"/>
    <property type="match status" value="1"/>
</dbReference>
<dbReference type="Gene3D" id="3.10.340.11">
    <property type="entry name" value="Methenyltetrahydromethanopterin Cyclohydrolase, Chain A, domain 1"/>
    <property type="match status" value="1"/>
</dbReference>
<dbReference type="Gene3D" id="3.30.1030.10">
    <property type="entry name" value="Methenyltetrahydromethanopterin Cyclohydrolase, Chain A, domain 2"/>
    <property type="match status" value="1"/>
</dbReference>
<dbReference type="HAMAP" id="MF_00486">
    <property type="entry name" value="McH"/>
    <property type="match status" value="1"/>
</dbReference>
<dbReference type="InterPro" id="IPR003209">
    <property type="entry name" value="METHMP_CycHdrlase"/>
</dbReference>
<dbReference type="NCBIfam" id="TIGR03120">
    <property type="entry name" value="one_C_mch"/>
    <property type="match status" value="1"/>
</dbReference>
<dbReference type="Pfam" id="PF02289">
    <property type="entry name" value="MCH"/>
    <property type="match status" value="1"/>
</dbReference>
<dbReference type="SUPFAM" id="SSF56199">
    <property type="entry name" value="Methenyltetrahydromethanopterin cyclohydrolase"/>
    <property type="match status" value="1"/>
</dbReference>